<keyword id="KW-0963">Cytoplasm</keyword>
<keyword id="KW-0255">Endonuclease</keyword>
<keyword id="KW-0378">Hydrolase</keyword>
<keyword id="KW-0460">Magnesium</keyword>
<keyword id="KW-0479">Metal-binding</keyword>
<keyword id="KW-0507">mRNA processing</keyword>
<keyword id="KW-0540">Nuclease</keyword>
<keyword id="KW-1185">Reference proteome</keyword>
<keyword id="KW-0694">RNA-binding</keyword>
<keyword id="KW-0698">rRNA processing</keyword>
<keyword id="KW-0699">rRNA-binding</keyword>
<keyword id="KW-0819">tRNA processing</keyword>
<feature type="chain" id="PRO_1000075720" description="Ribonuclease 3">
    <location>
        <begin position="1"/>
        <end position="224"/>
    </location>
</feature>
<feature type="domain" description="RNase III" evidence="1">
    <location>
        <begin position="4"/>
        <end position="127"/>
    </location>
</feature>
<feature type="domain" description="DRBM" evidence="1">
    <location>
        <begin position="154"/>
        <end position="223"/>
    </location>
</feature>
<feature type="active site" evidence="1">
    <location>
        <position position="44"/>
    </location>
</feature>
<feature type="active site" evidence="1">
    <location>
        <position position="116"/>
    </location>
</feature>
<feature type="binding site" evidence="1">
    <location>
        <position position="40"/>
    </location>
    <ligand>
        <name>Mg(2+)</name>
        <dbReference type="ChEBI" id="CHEBI:18420"/>
    </ligand>
</feature>
<feature type="binding site" evidence="1">
    <location>
        <position position="113"/>
    </location>
    <ligand>
        <name>Mg(2+)</name>
        <dbReference type="ChEBI" id="CHEBI:18420"/>
    </ligand>
</feature>
<feature type="binding site" evidence="1">
    <location>
        <position position="116"/>
    </location>
    <ligand>
        <name>Mg(2+)</name>
        <dbReference type="ChEBI" id="CHEBI:18420"/>
    </ligand>
</feature>
<dbReference type="EC" id="3.1.26.3" evidence="1"/>
<dbReference type="EMBL" id="CP000361">
    <property type="protein sequence ID" value="ABV67861.1"/>
    <property type="molecule type" value="Genomic_DNA"/>
</dbReference>
<dbReference type="RefSeq" id="WP_004509844.1">
    <property type="nucleotide sequence ID" value="NC_009850.1"/>
</dbReference>
<dbReference type="SMR" id="A8EV88"/>
<dbReference type="STRING" id="367737.Abu_1613"/>
<dbReference type="GeneID" id="24305304"/>
<dbReference type="KEGG" id="abu:Abu_1613"/>
<dbReference type="eggNOG" id="COG0571">
    <property type="taxonomic scope" value="Bacteria"/>
</dbReference>
<dbReference type="HOGENOM" id="CLU_000907_1_3_7"/>
<dbReference type="Proteomes" id="UP000001136">
    <property type="component" value="Chromosome"/>
</dbReference>
<dbReference type="GO" id="GO:0005737">
    <property type="term" value="C:cytoplasm"/>
    <property type="evidence" value="ECO:0007669"/>
    <property type="project" value="UniProtKB-SubCell"/>
</dbReference>
<dbReference type="GO" id="GO:0003725">
    <property type="term" value="F:double-stranded RNA binding"/>
    <property type="evidence" value="ECO:0007669"/>
    <property type="project" value="TreeGrafter"/>
</dbReference>
<dbReference type="GO" id="GO:0046872">
    <property type="term" value="F:metal ion binding"/>
    <property type="evidence" value="ECO:0007669"/>
    <property type="project" value="UniProtKB-KW"/>
</dbReference>
<dbReference type="GO" id="GO:0004525">
    <property type="term" value="F:ribonuclease III activity"/>
    <property type="evidence" value="ECO:0007669"/>
    <property type="project" value="UniProtKB-UniRule"/>
</dbReference>
<dbReference type="GO" id="GO:0019843">
    <property type="term" value="F:rRNA binding"/>
    <property type="evidence" value="ECO:0007669"/>
    <property type="project" value="UniProtKB-KW"/>
</dbReference>
<dbReference type="GO" id="GO:0006397">
    <property type="term" value="P:mRNA processing"/>
    <property type="evidence" value="ECO:0007669"/>
    <property type="project" value="UniProtKB-UniRule"/>
</dbReference>
<dbReference type="GO" id="GO:0010468">
    <property type="term" value="P:regulation of gene expression"/>
    <property type="evidence" value="ECO:0007669"/>
    <property type="project" value="TreeGrafter"/>
</dbReference>
<dbReference type="GO" id="GO:0006364">
    <property type="term" value="P:rRNA processing"/>
    <property type="evidence" value="ECO:0007669"/>
    <property type="project" value="UniProtKB-UniRule"/>
</dbReference>
<dbReference type="GO" id="GO:0008033">
    <property type="term" value="P:tRNA processing"/>
    <property type="evidence" value="ECO:0007669"/>
    <property type="project" value="UniProtKB-KW"/>
</dbReference>
<dbReference type="CDD" id="cd10845">
    <property type="entry name" value="DSRM_RNAse_III_family"/>
    <property type="match status" value="1"/>
</dbReference>
<dbReference type="CDD" id="cd00593">
    <property type="entry name" value="RIBOc"/>
    <property type="match status" value="1"/>
</dbReference>
<dbReference type="FunFam" id="1.10.1520.10:FF:000001">
    <property type="entry name" value="Ribonuclease 3"/>
    <property type="match status" value="1"/>
</dbReference>
<dbReference type="FunFam" id="3.30.160.20:FF:000003">
    <property type="entry name" value="Ribonuclease 3"/>
    <property type="match status" value="1"/>
</dbReference>
<dbReference type="Gene3D" id="3.30.160.20">
    <property type="match status" value="1"/>
</dbReference>
<dbReference type="Gene3D" id="1.10.1520.10">
    <property type="entry name" value="Ribonuclease III domain"/>
    <property type="match status" value="1"/>
</dbReference>
<dbReference type="HAMAP" id="MF_00104">
    <property type="entry name" value="RNase_III"/>
    <property type="match status" value="1"/>
</dbReference>
<dbReference type="InterPro" id="IPR014720">
    <property type="entry name" value="dsRBD_dom"/>
</dbReference>
<dbReference type="InterPro" id="IPR011907">
    <property type="entry name" value="RNase_III"/>
</dbReference>
<dbReference type="InterPro" id="IPR000999">
    <property type="entry name" value="RNase_III_dom"/>
</dbReference>
<dbReference type="InterPro" id="IPR036389">
    <property type="entry name" value="RNase_III_sf"/>
</dbReference>
<dbReference type="NCBIfam" id="TIGR02191">
    <property type="entry name" value="RNaseIII"/>
    <property type="match status" value="1"/>
</dbReference>
<dbReference type="PANTHER" id="PTHR11207:SF0">
    <property type="entry name" value="RIBONUCLEASE 3"/>
    <property type="match status" value="1"/>
</dbReference>
<dbReference type="PANTHER" id="PTHR11207">
    <property type="entry name" value="RIBONUCLEASE III"/>
    <property type="match status" value="1"/>
</dbReference>
<dbReference type="Pfam" id="PF00035">
    <property type="entry name" value="dsrm"/>
    <property type="match status" value="1"/>
</dbReference>
<dbReference type="Pfam" id="PF14622">
    <property type="entry name" value="Ribonucleas_3_3"/>
    <property type="match status" value="1"/>
</dbReference>
<dbReference type="SMART" id="SM00358">
    <property type="entry name" value="DSRM"/>
    <property type="match status" value="1"/>
</dbReference>
<dbReference type="SMART" id="SM00535">
    <property type="entry name" value="RIBOc"/>
    <property type="match status" value="1"/>
</dbReference>
<dbReference type="SUPFAM" id="SSF54768">
    <property type="entry name" value="dsRNA-binding domain-like"/>
    <property type="match status" value="1"/>
</dbReference>
<dbReference type="SUPFAM" id="SSF69065">
    <property type="entry name" value="RNase III domain-like"/>
    <property type="match status" value="1"/>
</dbReference>
<dbReference type="PROSITE" id="PS50137">
    <property type="entry name" value="DS_RBD"/>
    <property type="match status" value="1"/>
</dbReference>
<dbReference type="PROSITE" id="PS00517">
    <property type="entry name" value="RNASE_3_1"/>
    <property type="match status" value="1"/>
</dbReference>
<dbReference type="PROSITE" id="PS50142">
    <property type="entry name" value="RNASE_3_2"/>
    <property type="match status" value="1"/>
</dbReference>
<accession>A8EV88</accession>
<proteinExistence type="inferred from homology"/>
<reference key="1">
    <citation type="journal article" date="2007" name="PLoS ONE">
        <title>The complete genome sequence and analysis of the Epsilonproteobacterium Arcobacter butzleri.</title>
        <authorList>
            <person name="Miller W.G."/>
            <person name="Parker C.T."/>
            <person name="Rubenfield M."/>
            <person name="Mendz G.L."/>
            <person name="Woesten M.M.S.M."/>
            <person name="Ussery D.W."/>
            <person name="Stolz J.F."/>
            <person name="Binnewies T.T."/>
            <person name="Hallin P.F."/>
            <person name="Wang G."/>
            <person name="Malek J.A."/>
            <person name="Rogosin A."/>
            <person name="Stanker L.H."/>
            <person name="Mandrell R.E."/>
        </authorList>
    </citation>
    <scope>NUCLEOTIDE SEQUENCE [LARGE SCALE GENOMIC DNA]</scope>
    <source>
        <strain>RM4018</strain>
    </source>
</reference>
<sequence>MSDYSKLEKCLDYQFKNKNLIIEALTHKSFKKPYNNERLEFLGDAVLNLIVGEYLYLKFPKSNEGELSKIRASLVNETGFTRLANEIKLGEYIFISTAEERNKGRTKASILSDAFEAIMGAIYLESGLNTLKPIILRILEESYDKINLDVLFSDYKTALQEITQARFASIPEYKIEGSYGPDHKKEFEVSIWIDGKNYGKASGKSKKLAQQAAAKIAIDKLKEE</sequence>
<organism>
    <name type="scientific">Aliarcobacter butzleri (strain RM4018)</name>
    <name type="common">Arcobacter butzleri</name>
    <dbReference type="NCBI Taxonomy" id="367737"/>
    <lineage>
        <taxon>Bacteria</taxon>
        <taxon>Pseudomonadati</taxon>
        <taxon>Campylobacterota</taxon>
        <taxon>Epsilonproteobacteria</taxon>
        <taxon>Campylobacterales</taxon>
        <taxon>Arcobacteraceae</taxon>
        <taxon>Aliarcobacter</taxon>
    </lineage>
</organism>
<gene>
    <name evidence="1" type="primary">rnc</name>
    <name type="ordered locus">Abu_1613</name>
</gene>
<comment type="function">
    <text evidence="1">Digests double-stranded RNA. Involved in the processing of primary rRNA transcript to yield the immediate precursors to the large and small rRNAs (23S and 16S). Processes some mRNAs, and tRNAs when they are encoded in the rRNA operon. Processes pre-crRNA and tracrRNA of type II CRISPR loci if present in the organism.</text>
</comment>
<comment type="catalytic activity">
    <reaction evidence="1">
        <text>Endonucleolytic cleavage to 5'-phosphomonoester.</text>
        <dbReference type="EC" id="3.1.26.3"/>
    </reaction>
</comment>
<comment type="cofactor">
    <cofactor evidence="1">
        <name>Mg(2+)</name>
        <dbReference type="ChEBI" id="CHEBI:18420"/>
    </cofactor>
</comment>
<comment type="subunit">
    <text evidence="1">Homodimer.</text>
</comment>
<comment type="subcellular location">
    <subcellularLocation>
        <location evidence="1">Cytoplasm</location>
    </subcellularLocation>
</comment>
<comment type="similarity">
    <text evidence="1">Belongs to the ribonuclease III family.</text>
</comment>
<name>RNC_ALIB4</name>
<protein>
    <recommendedName>
        <fullName evidence="1">Ribonuclease 3</fullName>
        <ecNumber evidence="1">3.1.26.3</ecNumber>
    </recommendedName>
    <alternativeName>
        <fullName evidence="1">Ribonuclease III</fullName>
        <shortName evidence="1">RNase III</shortName>
    </alternativeName>
</protein>
<evidence type="ECO:0000255" key="1">
    <source>
        <dbReference type="HAMAP-Rule" id="MF_00104"/>
    </source>
</evidence>